<sequence>MFQFVKKKNEFLKFARLGSRAFTQNAQKTHSKGSNIALVSSSLLSVGMIALYYNVYGPSLSAGTPKEEGLHFIQHDWPQSKVLSGFDHASLRRGFQVYREVCSACHSLNLIAWRHLVGVTHTADEAKQMASEVEYEDGPDDEGNMFKRPGKLSDFLPPPYPNVEAARASNNGAAPPDLSCVVRGRHGGQDYIYSLLTGYTEPPAGVEVPDGMNFNPFFPGTQIAMARPLFDDAVEFEDGTPATTAQAAKDVVNFLHWASEPELDIRKKMGFQVITVLTILTALSMWYKRFKWTPIKNRKIFYQRPIK</sequence>
<name>CY1_SCHPO</name>
<protein>
    <recommendedName>
        <fullName>Cytochrome c1, heme protein, mitochondrial</fullName>
        <ecNumber>7.1.1.8</ecNumber>
    </recommendedName>
    <alternativeName>
        <fullName>Complex III subunit 4</fullName>
    </alternativeName>
    <alternativeName>
        <fullName>Complex III subunit IV</fullName>
    </alternativeName>
    <alternativeName>
        <fullName>Cytochrome b-c1 complex subunit 4</fullName>
    </alternativeName>
    <alternativeName>
        <fullName>Ubiquinol-cytochrome-c reductase complex cytochrome c1 subunit</fullName>
        <shortName>Cytochrome c-1</shortName>
    </alternativeName>
</protein>
<evidence type="ECO:0000250" key="1">
    <source>
        <dbReference type="UniProtKB" id="P07143"/>
    </source>
</evidence>
<evidence type="ECO:0000255" key="2"/>
<evidence type="ECO:0000255" key="3">
    <source>
        <dbReference type="PROSITE-ProRule" id="PRU00433"/>
    </source>
</evidence>
<evidence type="ECO:0000269" key="4">
    <source>
    </source>
</evidence>
<evidence type="ECO:0000305" key="5"/>
<dbReference type="EC" id="7.1.1.8"/>
<dbReference type="EMBL" id="CU329671">
    <property type="protein sequence ID" value="CAA18395.1"/>
    <property type="molecule type" value="Genomic_DNA"/>
</dbReference>
<dbReference type="PIR" id="T40089">
    <property type="entry name" value="T40089"/>
</dbReference>
<dbReference type="RefSeq" id="NP_595846.1">
    <property type="nucleotide sequence ID" value="NM_001021750.2"/>
</dbReference>
<dbReference type="PDB" id="8Q1B">
    <property type="method" value="EM"/>
    <property type="resolution" value="3.40 A"/>
    <property type="chains" value="D/O=1-307"/>
</dbReference>
<dbReference type="PDBsum" id="8Q1B"/>
<dbReference type="EMDB" id="EMD-18062"/>
<dbReference type="SMR" id="O59680"/>
<dbReference type="BioGRID" id="276984">
    <property type="interactions" value="3"/>
</dbReference>
<dbReference type="ComplexPortal" id="CPX-9308">
    <property type="entry name" value="Mitochondrial respiratory chain complex III"/>
</dbReference>
<dbReference type="FunCoup" id="O59680">
    <property type="interactions" value="325"/>
</dbReference>
<dbReference type="STRING" id="284812.O59680"/>
<dbReference type="PaxDb" id="4896-SPBC29A3.18.1"/>
<dbReference type="EnsemblFungi" id="SPBC29A3.18.1">
    <property type="protein sequence ID" value="SPBC29A3.18.1:pep"/>
    <property type="gene ID" value="SPBC29A3.18"/>
</dbReference>
<dbReference type="GeneID" id="2540456"/>
<dbReference type="KEGG" id="spo:2540456"/>
<dbReference type="PomBase" id="SPBC29A3.18">
    <property type="gene designation" value="cyt1"/>
</dbReference>
<dbReference type="VEuPathDB" id="FungiDB:SPBC29A3.18"/>
<dbReference type="eggNOG" id="KOG3052">
    <property type="taxonomic scope" value="Eukaryota"/>
</dbReference>
<dbReference type="HOGENOM" id="CLU_040334_1_1_1"/>
<dbReference type="InParanoid" id="O59680"/>
<dbReference type="OMA" id="WVKKFKW"/>
<dbReference type="PhylomeDB" id="O59680"/>
<dbReference type="Reactome" id="R-SPO-611105">
    <property type="pathway name" value="Respiratory electron transport"/>
</dbReference>
<dbReference type="PRO" id="PR:O59680"/>
<dbReference type="Proteomes" id="UP000002485">
    <property type="component" value="Chromosome II"/>
</dbReference>
<dbReference type="GO" id="GO:0005743">
    <property type="term" value="C:mitochondrial inner membrane"/>
    <property type="evidence" value="ECO:0000305"/>
    <property type="project" value="PomBase"/>
</dbReference>
<dbReference type="GO" id="GO:0005739">
    <property type="term" value="C:mitochondrion"/>
    <property type="evidence" value="ECO:0007005"/>
    <property type="project" value="PomBase"/>
</dbReference>
<dbReference type="GO" id="GO:0045275">
    <property type="term" value="C:respiratory chain complex III"/>
    <property type="evidence" value="ECO:0000318"/>
    <property type="project" value="GO_Central"/>
</dbReference>
<dbReference type="GO" id="GO:0020037">
    <property type="term" value="F:heme binding"/>
    <property type="evidence" value="ECO:0007669"/>
    <property type="project" value="InterPro"/>
</dbReference>
<dbReference type="GO" id="GO:0046872">
    <property type="term" value="F:metal ion binding"/>
    <property type="evidence" value="ECO:0007669"/>
    <property type="project" value="UniProtKB-KW"/>
</dbReference>
<dbReference type="GO" id="GO:0008121">
    <property type="term" value="F:ubiquinol-cytochrome-c reductase activity"/>
    <property type="evidence" value="ECO:0007669"/>
    <property type="project" value="UniProtKB-EC"/>
</dbReference>
<dbReference type="GO" id="GO:0006122">
    <property type="term" value="P:mitochondrial electron transport, ubiquinol to cytochrome c"/>
    <property type="evidence" value="ECO:0000318"/>
    <property type="project" value="GO_Central"/>
</dbReference>
<dbReference type="FunFam" id="1.10.760.10:FF:000002">
    <property type="entry name" value="Cytochrome c1, heme protein"/>
    <property type="match status" value="1"/>
</dbReference>
<dbReference type="FunFam" id="1.20.5.100:FF:000003">
    <property type="entry name" value="Cytochrome c1, heme protein, mitochondrial"/>
    <property type="match status" value="1"/>
</dbReference>
<dbReference type="Gene3D" id="1.10.760.10">
    <property type="entry name" value="Cytochrome c-like domain"/>
    <property type="match status" value="1"/>
</dbReference>
<dbReference type="Gene3D" id="1.20.5.100">
    <property type="entry name" value="Cytochrome c1, transmembrane anchor, C-terminal"/>
    <property type="match status" value="1"/>
</dbReference>
<dbReference type="InterPro" id="IPR009056">
    <property type="entry name" value="Cyt_c-like_dom"/>
</dbReference>
<dbReference type="InterPro" id="IPR036909">
    <property type="entry name" value="Cyt_c-like_dom_sf"/>
</dbReference>
<dbReference type="InterPro" id="IPR002326">
    <property type="entry name" value="Cyt_c1"/>
</dbReference>
<dbReference type="InterPro" id="IPR021157">
    <property type="entry name" value="Cyt_c1_TM_anchor_C"/>
</dbReference>
<dbReference type="PANTHER" id="PTHR10266">
    <property type="entry name" value="CYTOCHROME C1"/>
    <property type="match status" value="1"/>
</dbReference>
<dbReference type="PANTHER" id="PTHR10266:SF3">
    <property type="entry name" value="CYTOCHROME C1, HEME PROTEIN, MITOCHONDRIAL"/>
    <property type="match status" value="1"/>
</dbReference>
<dbReference type="Pfam" id="PF02167">
    <property type="entry name" value="Cytochrom_C1"/>
    <property type="match status" value="1"/>
</dbReference>
<dbReference type="PRINTS" id="PR00603">
    <property type="entry name" value="CYTOCHROMEC1"/>
</dbReference>
<dbReference type="SUPFAM" id="SSF46626">
    <property type="entry name" value="Cytochrome c"/>
    <property type="match status" value="1"/>
</dbReference>
<dbReference type="SUPFAM" id="SSF81496">
    <property type="entry name" value="Cytochrome c1 subunit of cytochrome bc1 complex (Ubiquinol-cytochrome c reductase), transmembrane anchor"/>
    <property type="match status" value="1"/>
</dbReference>
<dbReference type="PROSITE" id="PS51007">
    <property type="entry name" value="CYTC"/>
    <property type="match status" value="1"/>
</dbReference>
<organism>
    <name type="scientific">Schizosaccharomyces pombe (strain 972 / ATCC 24843)</name>
    <name type="common">Fission yeast</name>
    <dbReference type="NCBI Taxonomy" id="284812"/>
    <lineage>
        <taxon>Eukaryota</taxon>
        <taxon>Fungi</taxon>
        <taxon>Dikarya</taxon>
        <taxon>Ascomycota</taxon>
        <taxon>Taphrinomycotina</taxon>
        <taxon>Schizosaccharomycetes</taxon>
        <taxon>Schizosaccharomycetales</taxon>
        <taxon>Schizosaccharomycetaceae</taxon>
        <taxon>Schizosaccharomyces</taxon>
    </lineage>
</organism>
<accession>O59680</accession>
<feature type="transit peptide" description="Mitochondrion" evidence="2">
    <location>
        <begin position="1"/>
        <end position="56"/>
    </location>
</feature>
<feature type="chain" id="PRO_0000316219" description="Cytochrome c1, heme protein, mitochondrial">
    <location>
        <begin position="57"/>
        <end position="307"/>
    </location>
</feature>
<feature type="topological domain" description="Mitochondrial intermembrane" evidence="1">
    <location>
        <begin position="57"/>
        <end position="269"/>
    </location>
</feature>
<feature type="transmembrane region" description="Helical" evidence="2">
    <location>
        <begin position="270"/>
        <end position="287"/>
    </location>
</feature>
<feature type="topological domain" description="Mitochondrial matrix" evidence="1">
    <location>
        <begin position="288"/>
        <end position="307"/>
    </location>
</feature>
<feature type="domain" description="Cytochrome c" evidence="3">
    <location>
        <begin position="89"/>
        <end position="259"/>
    </location>
</feature>
<feature type="binding site" description="covalent" evidence="1">
    <location>
        <position position="102"/>
    </location>
    <ligand>
        <name>heme c</name>
        <dbReference type="ChEBI" id="CHEBI:61717"/>
    </ligand>
</feature>
<feature type="binding site" description="covalent" evidence="1">
    <location>
        <position position="105"/>
    </location>
    <ligand>
        <name>heme c</name>
        <dbReference type="ChEBI" id="CHEBI:61717"/>
    </ligand>
</feature>
<feature type="binding site" description="axial binding residue" evidence="1">
    <location>
        <position position="106"/>
    </location>
    <ligand>
        <name>heme c</name>
        <dbReference type="ChEBI" id="CHEBI:61717"/>
    </ligand>
    <ligandPart>
        <name>Fe</name>
        <dbReference type="ChEBI" id="CHEBI:18248"/>
    </ligandPart>
</feature>
<feature type="binding site" description="axial binding residue" evidence="1">
    <location>
        <position position="225"/>
    </location>
    <ligand>
        <name>heme c</name>
        <dbReference type="ChEBI" id="CHEBI:61717"/>
    </ligand>
    <ligandPart>
        <name>Fe</name>
        <dbReference type="ChEBI" id="CHEBI:18248"/>
    </ligandPart>
</feature>
<comment type="function">
    <text evidence="1">Component of the ubiquinol-cytochrome c oxidoreductase, a multisubunit transmembrane complex that is part of the mitochondrial electron transport chain which drives oxidative phosphorylation. The respiratory chain contains 3 multisubunit complexes succinate dehydrogenase (complex II, CII), ubiquinol-cytochrome c oxidoreductase (cytochrome b-c1 complex, complex III, CIII) and cytochrome c oxidase (complex IV, CIV), that cooperate to transfer electrons derived from NADH and succinate to molecular oxygen, creating an electrochemical gradient over the inner membrane that drives transmembrane transport and the ATP synthase. The cytochrome b-c1 complex catalyzes electron transfer from ubiquinol to cytochrome c, linking this redox reaction to translocation of protons across the mitochondrial inner membrane, with protons being carried across the membrane as hydrogens on the quinol. In the process called Q cycle, 2 protons are consumed from the matrix, 4 protons are released into the intermembrane space and 2 electrons are passed to cytochrome c. Cytochrome c1 is a catalytic core subunit containing a c-type heme. It transfers electrons from the [2Fe-2S] iron-sulfur cluster of the Rieske protein to cytochrome c.</text>
</comment>
<comment type="catalytic activity">
    <reaction evidence="1">
        <text>a quinol + 2 Fe(III)-[cytochrome c](out) = a quinone + 2 Fe(II)-[cytochrome c](out) + 2 H(+)(out)</text>
        <dbReference type="Rhea" id="RHEA:11484"/>
        <dbReference type="Rhea" id="RHEA-COMP:10350"/>
        <dbReference type="Rhea" id="RHEA-COMP:14399"/>
        <dbReference type="ChEBI" id="CHEBI:15378"/>
        <dbReference type="ChEBI" id="CHEBI:24646"/>
        <dbReference type="ChEBI" id="CHEBI:29033"/>
        <dbReference type="ChEBI" id="CHEBI:29034"/>
        <dbReference type="ChEBI" id="CHEBI:132124"/>
        <dbReference type="EC" id="7.1.1.8"/>
    </reaction>
</comment>
<comment type="cofactor">
    <cofactor evidence="1">
        <name>heme c</name>
        <dbReference type="ChEBI" id="CHEBI:61717"/>
    </cofactor>
    <text evidence="1">Binds 1 heme c group covalently per subunit.</text>
</comment>
<comment type="subunit">
    <text evidence="1">Component of the ubiquinol-cytochrome c oxidoreductase (cytochrome b-c1 complex, complex III, CIII), a multisubunit enzyme composed of 3 respiratory subunits cytochrome b, cytochrome c1 and Rieske protein, 2 core protein subunits, and additional low-molecular weight protein subunits. The complex exists as an obligatory dimer and forms supercomplexes (SCs) in the inner mitochondrial membrane with cytochrome c oxidase (complex IV, CIV).</text>
</comment>
<comment type="subcellular location">
    <subcellularLocation>
        <location evidence="4">Mitochondrion inner membrane</location>
        <topology evidence="4">Single-pass membrane protein</topology>
    </subcellularLocation>
</comment>
<comment type="similarity">
    <text evidence="5">Belongs to the cytochrome c family.</text>
</comment>
<gene>
    <name type="primary">cyt1</name>
    <name type="ORF">SPBC29A3.18</name>
</gene>
<reference key="1">
    <citation type="journal article" date="2002" name="Nature">
        <title>The genome sequence of Schizosaccharomyces pombe.</title>
        <authorList>
            <person name="Wood V."/>
            <person name="Gwilliam R."/>
            <person name="Rajandream M.A."/>
            <person name="Lyne M.H."/>
            <person name="Lyne R."/>
            <person name="Stewart A."/>
            <person name="Sgouros J.G."/>
            <person name="Peat N."/>
            <person name="Hayles J."/>
            <person name="Baker S.G."/>
            <person name="Basham D."/>
            <person name="Bowman S."/>
            <person name="Brooks K."/>
            <person name="Brown D."/>
            <person name="Brown S."/>
            <person name="Chillingworth T."/>
            <person name="Churcher C.M."/>
            <person name="Collins M."/>
            <person name="Connor R."/>
            <person name="Cronin A."/>
            <person name="Davis P."/>
            <person name="Feltwell T."/>
            <person name="Fraser A."/>
            <person name="Gentles S."/>
            <person name="Goble A."/>
            <person name="Hamlin N."/>
            <person name="Harris D.E."/>
            <person name="Hidalgo J."/>
            <person name="Hodgson G."/>
            <person name="Holroyd S."/>
            <person name="Hornsby T."/>
            <person name="Howarth S."/>
            <person name="Huckle E.J."/>
            <person name="Hunt S."/>
            <person name="Jagels K."/>
            <person name="James K.D."/>
            <person name="Jones L."/>
            <person name="Jones M."/>
            <person name="Leather S."/>
            <person name="McDonald S."/>
            <person name="McLean J."/>
            <person name="Mooney P."/>
            <person name="Moule S."/>
            <person name="Mungall K.L."/>
            <person name="Murphy L.D."/>
            <person name="Niblett D."/>
            <person name="Odell C."/>
            <person name="Oliver K."/>
            <person name="O'Neil S."/>
            <person name="Pearson D."/>
            <person name="Quail M.A."/>
            <person name="Rabbinowitsch E."/>
            <person name="Rutherford K.M."/>
            <person name="Rutter S."/>
            <person name="Saunders D."/>
            <person name="Seeger K."/>
            <person name="Sharp S."/>
            <person name="Skelton J."/>
            <person name="Simmonds M.N."/>
            <person name="Squares R."/>
            <person name="Squares S."/>
            <person name="Stevens K."/>
            <person name="Taylor K."/>
            <person name="Taylor R.G."/>
            <person name="Tivey A."/>
            <person name="Walsh S.V."/>
            <person name="Warren T."/>
            <person name="Whitehead S."/>
            <person name="Woodward J.R."/>
            <person name="Volckaert G."/>
            <person name="Aert R."/>
            <person name="Robben J."/>
            <person name="Grymonprez B."/>
            <person name="Weltjens I."/>
            <person name="Vanstreels E."/>
            <person name="Rieger M."/>
            <person name="Schaefer M."/>
            <person name="Mueller-Auer S."/>
            <person name="Gabel C."/>
            <person name="Fuchs M."/>
            <person name="Duesterhoeft A."/>
            <person name="Fritzc C."/>
            <person name="Holzer E."/>
            <person name="Moestl D."/>
            <person name="Hilbert H."/>
            <person name="Borzym K."/>
            <person name="Langer I."/>
            <person name="Beck A."/>
            <person name="Lehrach H."/>
            <person name="Reinhardt R."/>
            <person name="Pohl T.M."/>
            <person name="Eger P."/>
            <person name="Zimmermann W."/>
            <person name="Wedler H."/>
            <person name="Wambutt R."/>
            <person name="Purnelle B."/>
            <person name="Goffeau A."/>
            <person name="Cadieu E."/>
            <person name="Dreano S."/>
            <person name="Gloux S."/>
            <person name="Lelaure V."/>
            <person name="Mottier S."/>
            <person name="Galibert F."/>
            <person name="Aves S.J."/>
            <person name="Xiang Z."/>
            <person name="Hunt C."/>
            <person name="Moore K."/>
            <person name="Hurst S.M."/>
            <person name="Lucas M."/>
            <person name="Rochet M."/>
            <person name="Gaillardin C."/>
            <person name="Tallada V.A."/>
            <person name="Garzon A."/>
            <person name="Thode G."/>
            <person name="Daga R.R."/>
            <person name="Cruzado L."/>
            <person name="Jimenez J."/>
            <person name="Sanchez M."/>
            <person name="del Rey F."/>
            <person name="Benito J."/>
            <person name="Dominguez A."/>
            <person name="Revuelta J.L."/>
            <person name="Moreno S."/>
            <person name="Armstrong J."/>
            <person name="Forsburg S.L."/>
            <person name="Cerutti L."/>
            <person name="Lowe T."/>
            <person name="McCombie W.R."/>
            <person name="Paulsen I."/>
            <person name="Potashkin J."/>
            <person name="Shpakovski G.V."/>
            <person name="Ussery D."/>
            <person name="Barrell B.G."/>
            <person name="Nurse P."/>
        </authorList>
    </citation>
    <scope>NUCLEOTIDE SEQUENCE [LARGE SCALE GENOMIC DNA]</scope>
    <source>
        <strain>972 / ATCC 24843</strain>
    </source>
</reference>
<reference key="2">
    <citation type="journal article" date="2006" name="Nat. Biotechnol.">
        <title>ORFeome cloning and global analysis of protein localization in the fission yeast Schizosaccharomyces pombe.</title>
        <authorList>
            <person name="Matsuyama A."/>
            <person name="Arai R."/>
            <person name="Yashiroda Y."/>
            <person name="Shirai A."/>
            <person name="Kamata A."/>
            <person name="Sekido S."/>
            <person name="Kobayashi Y."/>
            <person name="Hashimoto A."/>
            <person name="Hamamoto M."/>
            <person name="Hiraoka Y."/>
            <person name="Horinouchi S."/>
            <person name="Yoshida M."/>
        </authorList>
    </citation>
    <scope>SUBCELLULAR LOCATION [LARGE SCALE ANALYSIS]</scope>
</reference>
<keyword id="KW-0002">3D-structure</keyword>
<keyword id="KW-0249">Electron transport</keyword>
<keyword id="KW-0349">Heme</keyword>
<keyword id="KW-0408">Iron</keyword>
<keyword id="KW-0472">Membrane</keyword>
<keyword id="KW-0479">Metal-binding</keyword>
<keyword id="KW-0496">Mitochondrion</keyword>
<keyword id="KW-0999">Mitochondrion inner membrane</keyword>
<keyword id="KW-1185">Reference proteome</keyword>
<keyword id="KW-0679">Respiratory chain</keyword>
<keyword id="KW-0809">Transit peptide</keyword>
<keyword id="KW-1278">Translocase</keyword>
<keyword id="KW-0812">Transmembrane</keyword>
<keyword id="KW-1133">Transmembrane helix</keyword>
<keyword id="KW-0813">Transport</keyword>
<proteinExistence type="evidence at protein level"/>